<reference key="1">
    <citation type="submission" date="2006-05" db="EMBL/GenBank/DDBJ databases">
        <title>Complete sequence of chromosome 3 of Burkholderia cenocepacia AU 1054.</title>
        <authorList>
            <consortium name="US DOE Joint Genome Institute"/>
            <person name="Copeland A."/>
            <person name="Lucas S."/>
            <person name="Lapidus A."/>
            <person name="Barry K."/>
            <person name="Detter J.C."/>
            <person name="Glavina del Rio T."/>
            <person name="Hammon N."/>
            <person name="Israni S."/>
            <person name="Dalin E."/>
            <person name="Tice H."/>
            <person name="Pitluck S."/>
            <person name="Chain P."/>
            <person name="Malfatti S."/>
            <person name="Shin M."/>
            <person name="Vergez L."/>
            <person name="Schmutz J."/>
            <person name="Larimer F."/>
            <person name="Land M."/>
            <person name="Hauser L."/>
            <person name="Kyrpides N."/>
            <person name="Lykidis A."/>
            <person name="LiPuma J.J."/>
            <person name="Konstantinidis K."/>
            <person name="Tiedje J.M."/>
            <person name="Richardson P."/>
        </authorList>
    </citation>
    <scope>NUCLEOTIDE SEQUENCE [LARGE SCALE GENOMIC DNA]</scope>
    <source>
        <strain>AU 1054</strain>
    </source>
</reference>
<sequence>MSMPTIRAVRALTVRGGGADYHDQDAGHWIDDHIATPMSRYPEYRQSRQSFGINVLGTLVIEVEASDGTVGFAVTTGGEIGAFIVERHLARFIEGQRVTDIEKMWDQMFHATLYYGRKGVVLNAISGVDLALWDLLAKVRREPVHQLLGGKVRDELEFYATGARPDLAKEMGFIGGKLPLHHGPAEGEAGLRRNLDALADMRSRVGADFWLMLDCWMSLDVPYATRLAHEAHALGLKWIEECLPPDDYWGYAKLRRDVPRGMLVTTGEHEATRWGFRMLLEMECCDIIQPDVGWCGGLTELMRISALADARGVLVIPHGSSVYSYHFVTTRHNSPFAEFLMMAPQADRVVPMFDPLLLDEPVPVGGRMKVPDTPGFGVRLNPDVRMQRPYEH</sequence>
<protein>
    <recommendedName>
        <fullName evidence="1">L-rhamnonate dehydratase</fullName>
        <shortName evidence="1">RhamD</shortName>
        <ecNumber evidence="1">4.2.1.90</ecNumber>
    </recommendedName>
</protein>
<comment type="function">
    <text evidence="1">Catalyzes the dehydration of L-rhamnonate to 2-keto-3-deoxy-L-rhamnonate (KDR).</text>
</comment>
<comment type="catalytic activity">
    <reaction evidence="1">
        <text>L-rhamnonate = 2-dehydro-3-deoxy-L-rhamnonate + H2O</text>
        <dbReference type="Rhea" id="RHEA:23080"/>
        <dbReference type="ChEBI" id="CHEBI:15377"/>
        <dbReference type="ChEBI" id="CHEBI:58118"/>
        <dbReference type="ChEBI" id="CHEBI:58371"/>
        <dbReference type="EC" id="4.2.1.90"/>
    </reaction>
</comment>
<comment type="cofactor">
    <cofactor evidence="1">
        <name>Mg(2+)</name>
        <dbReference type="ChEBI" id="CHEBI:18420"/>
    </cofactor>
    <text evidence="1">Binds 1 Mg(2+) ion per subunit.</text>
</comment>
<comment type="subunit">
    <text evidence="1">Homooctamer; tetramer of dimers.</text>
</comment>
<comment type="miscellaneous">
    <text evidence="1">Reaction proceeds via a syn dehydration.</text>
</comment>
<comment type="similarity">
    <text evidence="1">Belongs to the mandelate racemase/muconate lactonizing enzyme family. RhamD subfamily.</text>
</comment>
<evidence type="ECO:0000255" key="1">
    <source>
        <dbReference type="HAMAP-Rule" id="MF_01288"/>
    </source>
</evidence>
<organism>
    <name type="scientific">Burkholderia orbicola (strain AU 1054)</name>
    <dbReference type="NCBI Taxonomy" id="331271"/>
    <lineage>
        <taxon>Bacteria</taxon>
        <taxon>Pseudomonadati</taxon>
        <taxon>Pseudomonadota</taxon>
        <taxon>Betaproteobacteria</taxon>
        <taxon>Burkholderiales</taxon>
        <taxon>Burkholderiaceae</taxon>
        <taxon>Burkholderia</taxon>
        <taxon>Burkholderia cepacia complex</taxon>
        <taxon>Burkholderia orbicola</taxon>
    </lineage>
</organism>
<accession>Q1BGJ0</accession>
<gene>
    <name evidence="1" type="primary">rhmD</name>
    <name type="ordered locus">Bcen_6403</name>
</gene>
<name>RHMD_BURO1</name>
<keyword id="KW-0456">Lyase</keyword>
<keyword id="KW-0460">Magnesium</keyword>
<keyword id="KW-0479">Metal-binding</keyword>
<feature type="chain" id="PRO_0000351684" description="L-rhamnonate dehydratase">
    <location>
        <begin position="1"/>
        <end position="392"/>
    </location>
</feature>
<feature type="active site" description="Proton acceptor" evidence="1">
    <location>
        <position position="318"/>
    </location>
</feature>
<feature type="binding site" evidence="1">
    <location>
        <position position="22"/>
    </location>
    <ligand>
        <name>substrate</name>
    </ligand>
</feature>
<feature type="binding site" evidence="1">
    <location>
        <position position="48"/>
    </location>
    <ligand>
        <name>substrate</name>
    </ligand>
</feature>
<feature type="binding site" evidence="1">
    <location>
        <position position="214"/>
    </location>
    <ligand>
        <name>Mg(2+)</name>
        <dbReference type="ChEBI" id="CHEBI:18420"/>
    </ligand>
</feature>
<feature type="binding site" evidence="1">
    <location>
        <position position="240"/>
    </location>
    <ligand>
        <name>Mg(2+)</name>
        <dbReference type="ChEBI" id="CHEBI:18420"/>
    </ligand>
</feature>
<feature type="binding site" evidence="1">
    <location>
        <position position="268"/>
    </location>
    <ligand>
        <name>Mg(2+)</name>
        <dbReference type="ChEBI" id="CHEBI:18420"/>
    </ligand>
</feature>
<feature type="binding site" evidence="1">
    <location>
        <position position="338"/>
    </location>
    <ligand>
        <name>substrate</name>
    </ligand>
</feature>
<feature type="site" description="Increases basicity of active site His" evidence="1">
    <location>
        <position position="291"/>
    </location>
</feature>
<feature type="site" description="Transition state stabilizer" evidence="1">
    <location>
        <position position="338"/>
    </location>
</feature>
<dbReference type="EC" id="4.2.1.90" evidence="1"/>
<dbReference type="EMBL" id="CP000380">
    <property type="protein sequence ID" value="ABF81265.1"/>
    <property type="molecule type" value="Genomic_DNA"/>
</dbReference>
<dbReference type="SMR" id="Q1BGJ0"/>
<dbReference type="HOGENOM" id="CLU_030273_1_0_4"/>
<dbReference type="GO" id="GO:0050032">
    <property type="term" value="F:L-rhamnonate dehydratase activity"/>
    <property type="evidence" value="ECO:0007669"/>
    <property type="project" value="UniProtKB-UniRule"/>
</dbReference>
<dbReference type="GO" id="GO:0000287">
    <property type="term" value="F:magnesium ion binding"/>
    <property type="evidence" value="ECO:0007669"/>
    <property type="project" value="UniProtKB-UniRule"/>
</dbReference>
<dbReference type="GO" id="GO:0009063">
    <property type="term" value="P:amino acid catabolic process"/>
    <property type="evidence" value="ECO:0007669"/>
    <property type="project" value="InterPro"/>
</dbReference>
<dbReference type="GO" id="GO:0016052">
    <property type="term" value="P:carbohydrate catabolic process"/>
    <property type="evidence" value="ECO:0007669"/>
    <property type="project" value="TreeGrafter"/>
</dbReference>
<dbReference type="CDD" id="cd03327">
    <property type="entry name" value="MR_like_2"/>
    <property type="match status" value="1"/>
</dbReference>
<dbReference type="FunFam" id="3.20.20.120:FF:000005">
    <property type="entry name" value="Putative L-rhamnonate dehydratase"/>
    <property type="match status" value="1"/>
</dbReference>
<dbReference type="Gene3D" id="3.20.20.120">
    <property type="entry name" value="Enolase-like C-terminal domain"/>
    <property type="match status" value="1"/>
</dbReference>
<dbReference type="Gene3D" id="3.30.390.10">
    <property type="entry name" value="Enolase-like, N-terminal domain"/>
    <property type="match status" value="1"/>
</dbReference>
<dbReference type="HAMAP" id="MF_01288">
    <property type="entry name" value="Rhamnon_dehydrat"/>
    <property type="match status" value="1"/>
</dbReference>
<dbReference type="InterPro" id="IPR036849">
    <property type="entry name" value="Enolase-like_C_sf"/>
</dbReference>
<dbReference type="InterPro" id="IPR029017">
    <property type="entry name" value="Enolase-like_N"/>
</dbReference>
<dbReference type="InterPro" id="IPR029065">
    <property type="entry name" value="Enolase_C-like"/>
</dbReference>
<dbReference type="InterPro" id="IPR023444">
    <property type="entry name" value="L-Rhamnon_dehydrat"/>
</dbReference>
<dbReference type="InterPro" id="IPR018110">
    <property type="entry name" value="Mandel_Rmase/mucon_lact_enz_CS"/>
</dbReference>
<dbReference type="InterPro" id="IPR013342">
    <property type="entry name" value="Mandelate_racemase_C"/>
</dbReference>
<dbReference type="InterPro" id="IPR013341">
    <property type="entry name" value="Mandelate_racemase_N_dom"/>
</dbReference>
<dbReference type="InterPro" id="IPR046945">
    <property type="entry name" value="RHMD-like"/>
</dbReference>
<dbReference type="NCBIfam" id="NF011968">
    <property type="entry name" value="PRK15440.1"/>
    <property type="match status" value="1"/>
</dbReference>
<dbReference type="PANTHER" id="PTHR13794">
    <property type="entry name" value="ENOLASE SUPERFAMILY, MANDELATE RACEMASE"/>
    <property type="match status" value="1"/>
</dbReference>
<dbReference type="PANTHER" id="PTHR13794:SF58">
    <property type="entry name" value="MITOCHONDRIAL ENOLASE SUPERFAMILY MEMBER 1"/>
    <property type="match status" value="1"/>
</dbReference>
<dbReference type="Pfam" id="PF13378">
    <property type="entry name" value="MR_MLE_C"/>
    <property type="match status" value="1"/>
</dbReference>
<dbReference type="Pfam" id="PF02746">
    <property type="entry name" value="MR_MLE_N"/>
    <property type="match status" value="1"/>
</dbReference>
<dbReference type="SFLD" id="SFLDG00179">
    <property type="entry name" value="mandelate_racemase"/>
    <property type="match status" value="1"/>
</dbReference>
<dbReference type="SFLD" id="SFLDF00006">
    <property type="entry name" value="rhamnonate_dehydratase"/>
    <property type="match status" value="1"/>
</dbReference>
<dbReference type="SMART" id="SM00922">
    <property type="entry name" value="MR_MLE"/>
    <property type="match status" value="1"/>
</dbReference>
<dbReference type="SUPFAM" id="SSF51604">
    <property type="entry name" value="Enolase C-terminal domain-like"/>
    <property type="match status" value="1"/>
</dbReference>
<dbReference type="SUPFAM" id="SSF54826">
    <property type="entry name" value="Enolase N-terminal domain-like"/>
    <property type="match status" value="1"/>
</dbReference>
<dbReference type="PROSITE" id="PS00908">
    <property type="entry name" value="MR_MLE_1"/>
    <property type="match status" value="1"/>
</dbReference>
<proteinExistence type="inferred from homology"/>